<comment type="function">
    <text evidence="1">Represses a number of genes involved in the response to DNA damage (SOS response), including recA and lexA. Binds to the 16 bp palindromic sequence 5'-CTGTATATATATACAG-3'. In the presence of single-stranded DNA, RecA interacts with LexA causing an autocatalytic cleavage which disrupts the DNA-binding part of LexA, leading to derepression of the SOS regulon and eventually DNA repair.</text>
</comment>
<comment type="catalytic activity">
    <reaction evidence="1">
        <text>Hydrolysis of Ala-|-Gly bond in repressor LexA.</text>
        <dbReference type="EC" id="3.4.21.88"/>
    </reaction>
</comment>
<comment type="subunit">
    <text evidence="1">Homodimer.</text>
</comment>
<comment type="similarity">
    <text evidence="1">Belongs to the peptidase S24 family.</text>
</comment>
<reference key="1">
    <citation type="submission" date="2007-11" db="EMBL/GenBank/DDBJ databases">
        <authorList>
            <consortium name="The Salmonella enterica serovar Paratyphi B Genome Sequencing Project"/>
            <person name="McClelland M."/>
            <person name="Sanderson E.K."/>
            <person name="Porwollik S."/>
            <person name="Spieth J."/>
            <person name="Clifton W.S."/>
            <person name="Fulton R."/>
            <person name="Cordes M."/>
            <person name="Wollam A."/>
            <person name="Shah N."/>
            <person name="Pepin K."/>
            <person name="Bhonagiri V."/>
            <person name="Nash W."/>
            <person name="Johnson M."/>
            <person name="Thiruvilangam P."/>
            <person name="Wilson R."/>
        </authorList>
    </citation>
    <scope>NUCLEOTIDE SEQUENCE [LARGE SCALE GENOMIC DNA]</scope>
    <source>
        <strain>ATCC BAA-1250 / SPB7</strain>
    </source>
</reference>
<feature type="chain" id="PRO_1000074063" description="LexA repressor">
    <location>
        <begin position="1"/>
        <end position="202"/>
    </location>
</feature>
<feature type="DNA-binding region" description="H-T-H motif" evidence="1">
    <location>
        <begin position="28"/>
        <end position="48"/>
    </location>
</feature>
<feature type="active site" description="For autocatalytic cleavage activity" evidence="1">
    <location>
        <position position="119"/>
    </location>
</feature>
<feature type="active site" description="For autocatalytic cleavage activity" evidence="1">
    <location>
        <position position="156"/>
    </location>
</feature>
<feature type="site" description="Cleavage; by autolysis" evidence="1">
    <location>
        <begin position="84"/>
        <end position="85"/>
    </location>
</feature>
<name>LEXA_SALPB</name>
<protein>
    <recommendedName>
        <fullName evidence="1">LexA repressor</fullName>
        <ecNumber evidence="1">3.4.21.88</ecNumber>
    </recommendedName>
</protein>
<accession>A9N1L6</accession>
<evidence type="ECO:0000255" key="1">
    <source>
        <dbReference type="HAMAP-Rule" id="MF_00015"/>
    </source>
</evidence>
<proteinExistence type="inferred from homology"/>
<dbReference type="EC" id="3.4.21.88" evidence="1"/>
<dbReference type="EMBL" id="CP000886">
    <property type="protein sequence ID" value="ABX70497.1"/>
    <property type="molecule type" value="Genomic_DNA"/>
</dbReference>
<dbReference type="RefSeq" id="WP_000646079.1">
    <property type="nucleotide sequence ID" value="NC_010102.1"/>
</dbReference>
<dbReference type="SMR" id="A9N1L6"/>
<dbReference type="MEROPS" id="S24.001"/>
<dbReference type="KEGG" id="spq:SPAB_05220"/>
<dbReference type="PATRIC" id="fig|1016998.12.peg.4889"/>
<dbReference type="HOGENOM" id="CLU_066192_45_3_6"/>
<dbReference type="BioCyc" id="SENT1016998:SPAB_RS21260-MONOMER"/>
<dbReference type="Proteomes" id="UP000008556">
    <property type="component" value="Chromosome"/>
</dbReference>
<dbReference type="GO" id="GO:0003677">
    <property type="term" value="F:DNA binding"/>
    <property type="evidence" value="ECO:0007669"/>
    <property type="project" value="UniProtKB-UniRule"/>
</dbReference>
<dbReference type="GO" id="GO:0004252">
    <property type="term" value="F:serine-type endopeptidase activity"/>
    <property type="evidence" value="ECO:0007669"/>
    <property type="project" value="UniProtKB-UniRule"/>
</dbReference>
<dbReference type="GO" id="GO:0006281">
    <property type="term" value="P:DNA repair"/>
    <property type="evidence" value="ECO:0007669"/>
    <property type="project" value="UniProtKB-UniRule"/>
</dbReference>
<dbReference type="GO" id="GO:0006260">
    <property type="term" value="P:DNA replication"/>
    <property type="evidence" value="ECO:0007669"/>
    <property type="project" value="UniProtKB-UniRule"/>
</dbReference>
<dbReference type="GO" id="GO:0045892">
    <property type="term" value="P:negative regulation of DNA-templated transcription"/>
    <property type="evidence" value="ECO:0007669"/>
    <property type="project" value="UniProtKB-UniRule"/>
</dbReference>
<dbReference type="GO" id="GO:0006508">
    <property type="term" value="P:proteolysis"/>
    <property type="evidence" value="ECO:0007669"/>
    <property type="project" value="InterPro"/>
</dbReference>
<dbReference type="GO" id="GO:0009432">
    <property type="term" value="P:SOS response"/>
    <property type="evidence" value="ECO:0007669"/>
    <property type="project" value="UniProtKB-UniRule"/>
</dbReference>
<dbReference type="CDD" id="cd06529">
    <property type="entry name" value="S24_LexA-like"/>
    <property type="match status" value="1"/>
</dbReference>
<dbReference type="FunFam" id="1.10.10.10:FF:000009">
    <property type="entry name" value="LexA repressor"/>
    <property type="match status" value="1"/>
</dbReference>
<dbReference type="FunFam" id="2.10.109.10:FF:000001">
    <property type="entry name" value="LexA repressor"/>
    <property type="match status" value="1"/>
</dbReference>
<dbReference type="Gene3D" id="2.10.109.10">
    <property type="entry name" value="Umud Fragment, subunit A"/>
    <property type="match status" value="1"/>
</dbReference>
<dbReference type="Gene3D" id="1.10.10.10">
    <property type="entry name" value="Winged helix-like DNA-binding domain superfamily/Winged helix DNA-binding domain"/>
    <property type="match status" value="1"/>
</dbReference>
<dbReference type="HAMAP" id="MF_00015">
    <property type="entry name" value="LexA"/>
    <property type="match status" value="1"/>
</dbReference>
<dbReference type="InterPro" id="IPR006200">
    <property type="entry name" value="LexA"/>
</dbReference>
<dbReference type="InterPro" id="IPR039418">
    <property type="entry name" value="LexA-like"/>
</dbReference>
<dbReference type="InterPro" id="IPR036286">
    <property type="entry name" value="LexA/Signal_pep-like_sf"/>
</dbReference>
<dbReference type="InterPro" id="IPR006199">
    <property type="entry name" value="LexA_DNA-bd_dom"/>
</dbReference>
<dbReference type="InterPro" id="IPR050077">
    <property type="entry name" value="LexA_repressor"/>
</dbReference>
<dbReference type="InterPro" id="IPR006197">
    <property type="entry name" value="Peptidase_S24_LexA"/>
</dbReference>
<dbReference type="InterPro" id="IPR015927">
    <property type="entry name" value="Peptidase_S24_S26A/B/C"/>
</dbReference>
<dbReference type="InterPro" id="IPR036388">
    <property type="entry name" value="WH-like_DNA-bd_sf"/>
</dbReference>
<dbReference type="InterPro" id="IPR036390">
    <property type="entry name" value="WH_DNA-bd_sf"/>
</dbReference>
<dbReference type="NCBIfam" id="TIGR00498">
    <property type="entry name" value="lexA"/>
    <property type="match status" value="1"/>
</dbReference>
<dbReference type="PANTHER" id="PTHR33516">
    <property type="entry name" value="LEXA REPRESSOR"/>
    <property type="match status" value="1"/>
</dbReference>
<dbReference type="PANTHER" id="PTHR33516:SF2">
    <property type="entry name" value="LEXA REPRESSOR-RELATED"/>
    <property type="match status" value="1"/>
</dbReference>
<dbReference type="Pfam" id="PF01726">
    <property type="entry name" value="LexA_DNA_bind"/>
    <property type="match status" value="1"/>
</dbReference>
<dbReference type="Pfam" id="PF00717">
    <property type="entry name" value="Peptidase_S24"/>
    <property type="match status" value="1"/>
</dbReference>
<dbReference type="PRINTS" id="PR00726">
    <property type="entry name" value="LEXASERPTASE"/>
</dbReference>
<dbReference type="SUPFAM" id="SSF51306">
    <property type="entry name" value="LexA/Signal peptidase"/>
    <property type="match status" value="1"/>
</dbReference>
<dbReference type="SUPFAM" id="SSF46785">
    <property type="entry name" value="Winged helix' DNA-binding domain"/>
    <property type="match status" value="1"/>
</dbReference>
<keyword id="KW-0068">Autocatalytic cleavage</keyword>
<keyword id="KW-0227">DNA damage</keyword>
<keyword id="KW-0234">DNA repair</keyword>
<keyword id="KW-0235">DNA replication</keyword>
<keyword id="KW-0238">DNA-binding</keyword>
<keyword id="KW-0378">Hydrolase</keyword>
<keyword id="KW-0678">Repressor</keyword>
<keyword id="KW-0742">SOS response</keyword>
<keyword id="KW-0804">Transcription</keyword>
<keyword id="KW-0805">Transcription regulation</keyword>
<organism>
    <name type="scientific">Salmonella paratyphi B (strain ATCC BAA-1250 / SPB7)</name>
    <dbReference type="NCBI Taxonomy" id="1016998"/>
    <lineage>
        <taxon>Bacteria</taxon>
        <taxon>Pseudomonadati</taxon>
        <taxon>Pseudomonadota</taxon>
        <taxon>Gammaproteobacteria</taxon>
        <taxon>Enterobacterales</taxon>
        <taxon>Enterobacteriaceae</taxon>
        <taxon>Salmonella</taxon>
    </lineage>
</organism>
<gene>
    <name evidence="1" type="primary">lexA</name>
    <name type="ordered locus">SPAB_05220</name>
</gene>
<sequence>MKALTARQQEVFDLIRDHISQTGMPPTRAEIAQRLGFRSPNAAEEHLKALARKGVLEIVSGASRGIRLLQEEEDGLPLVGRVAAGEPLLAQQHIEGHYQVDPSLFKPSADFLLRVSGMSMKDIGIMDGDLLAVHKTQDVRNGQVVVARIDDEVTVKRLKKQGNKVELLPENSEFTPIVVDLREQSFTIEGLAVGVIRNGEWL</sequence>